<geneLocation type="chloroplast"/>
<reference key="1">
    <citation type="journal article" date="1993" name="Nucleic Acids Res.">
        <title>Complete sequence of Euglena gracilis chloroplast DNA.</title>
        <authorList>
            <person name="Hallick R.B."/>
            <person name="Hong L."/>
            <person name="Drager R.G."/>
            <person name="Favreau M.R."/>
            <person name="Monfort A."/>
            <person name="Orsat B."/>
            <person name="Spielmann A."/>
            <person name="Stutz E."/>
        </authorList>
    </citation>
    <scope>NUCLEOTIDE SEQUENCE [LARGE SCALE GENOMIC DNA]</scope>
    <source>
        <strain>Z / UTEX 753</strain>
    </source>
</reference>
<gene>
    <name evidence="1" type="primary">petG</name>
</gene>
<sequence length="37" mass="4147">MVETLLSGIILGLIPITICGLFFTAYLQYMRSGNSFY</sequence>
<accession>P30396</accession>
<protein>
    <recommendedName>
        <fullName evidence="1">Cytochrome b6-f complex subunit 5</fullName>
    </recommendedName>
    <alternativeName>
        <fullName evidence="1">Cytochrome b6-f complex subunit PetG</fullName>
    </alternativeName>
    <alternativeName>
        <fullName evidence="1">Cytochrome b6-f complex subunit V</fullName>
    </alternativeName>
</protein>
<keyword id="KW-0150">Chloroplast</keyword>
<keyword id="KW-0249">Electron transport</keyword>
<keyword id="KW-0472">Membrane</keyword>
<keyword id="KW-0602">Photosynthesis</keyword>
<keyword id="KW-0934">Plastid</keyword>
<keyword id="KW-0793">Thylakoid</keyword>
<keyword id="KW-0812">Transmembrane</keyword>
<keyword id="KW-1133">Transmembrane helix</keyword>
<keyword id="KW-0813">Transport</keyword>
<feature type="chain" id="PRO_0000216382" description="Cytochrome b6-f complex subunit 5">
    <location>
        <begin position="1"/>
        <end position="37"/>
    </location>
</feature>
<feature type="transmembrane region" description="Helical" evidence="1">
    <location>
        <begin position="5"/>
        <end position="25"/>
    </location>
</feature>
<evidence type="ECO:0000255" key="1">
    <source>
        <dbReference type="HAMAP-Rule" id="MF_00432"/>
    </source>
</evidence>
<proteinExistence type="inferred from homology"/>
<name>PETG_EUGGR</name>
<organism>
    <name type="scientific">Euglena gracilis</name>
    <dbReference type="NCBI Taxonomy" id="3039"/>
    <lineage>
        <taxon>Eukaryota</taxon>
        <taxon>Discoba</taxon>
        <taxon>Euglenozoa</taxon>
        <taxon>Euglenida</taxon>
        <taxon>Spirocuta</taxon>
        <taxon>Euglenophyceae</taxon>
        <taxon>Euglenales</taxon>
        <taxon>Euglenaceae</taxon>
        <taxon>Euglena</taxon>
    </lineage>
</organism>
<dbReference type="EMBL" id="Z11874">
    <property type="protein sequence ID" value="CAA77909.1"/>
    <property type="molecule type" value="Genomic_DNA"/>
</dbReference>
<dbReference type="EMBL" id="X70810">
    <property type="protein sequence ID" value="CAA50092.1"/>
    <property type="molecule type" value="Genomic_DNA"/>
</dbReference>
<dbReference type="PIR" id="S26087">
    <property type="entry name" value="S26087"/>
</dbReference>
<dbReference type="RefSeq" id="NP_041905.1">
    <property type="nucleotide sequence ID" value="NC_001603.2"/>
</dbReference>
<dbReference type="SMR" id="P30396"/>
<dbReference type="GeneID" id="807536"/>
<dbReference type="GO" id="GO:0009535">
    <property type="term" value="C:chloroplast thylakoid membrane"/>
    <property type="evidence" value="ECO:0007669"/>
    <property type="project" value="UniProtKB-SubCell"/>
</dbReference>
<dbReference type="GO" id="GO:0009512">
    <property type="term" value="C:cytochrome b6f complex"/>
    <property type="evidence" value="ECO:0007669"/>
    <property type="project" value="InterPro"/>
</dbReference>
<dbReference type="GO" id="GO:0045158">
    <property type="term" value="F:electron transporter, transferring electrons within cytochrome b6/f complex of photosystem II activity"/>
    <property type="evidence" value="ECO:0007669"/>
    <property type="project" value="UniProtKB-UniRule"/>
</dbReference>
<dbReference type="GO" id="GO:0017004">
    <property type="term" value="P:cytochrome complex assembly"/>
    <property type="evidence" value="ECO:0007669"/>
    <property type="project" value="UniProtKB-UniRule"/>
</dbReference>
<dbReference type="GO" id="GO:0015979">
    <property type="term" value="P:photosynthesis"/>
    <property type="evidence" value="ECO:0007669"/>
    <property type="project" value="UniProtKB-KW"/>
</dbReference>
<dbReference type="HAMAP" id="MF_00432">
    <property type="entry name" value="Cytb6_f_PetG"/>
    <property type="match status" value="1"/>
</dbReference>
<dbReference type="InterPro" id="IPR003683">
    <property type="entry name" value="Cyt_6/f_cplx_su5"/>
</dbReference>
<dbReference type="InterPro" id="IPR036099">
    <property type="entry name" value="Cyt_6/f_cplx_su5_sf"/>
</dbReference>
<dbReference type="Pfam" id="PF02529">
    <property type="entry name" value="PetG"/>
    <property type="match status" value="1"/>
</dbReference>
<dbReference type="PIRSF" id="PIRSF000034">
    <property type="entry name" value="Cyt_b6-f_V"/>
    <property type="match status" value="1"/>
</dbReference>
<dbReference type="SUPFAM" id="SSF103446">
    <property type="entry name" value="PetG subunit of the cytochrome b6f complex"/>
    <property type="match status" value="1"/>
</dbReference>
<comment type="function">
    <text evidence="1">Component of the cytochrome b6-f complex, which mediates electron transfer between photosystem II (PSII) and photosystem I (PSI), cyclic electron flow around PSI, and state transitions. PetG is required for either the stability or assembly of the cytochrome b6-f complex.</text>
</comment>
<comment type="subunit">
    <text evidence="1">The 4 large subunits of the cytochrome b6-f complex are cytochrome b6, subunit IV (17 kDa polypeptide, PetD), cytochrome f and the Rieske protein, while the 4 small subunits are PetG, PetL, PetM and PetN. The complex functions as a dimer.</text>
</comment>
<comment type="subcellular location">
    <subcellularLocation>
        <location evidence="1">Plastid</location>
        <location evidence="1">Chloroplast thylakoid membrane</location>
        <topology evidence="1">Single-pass membrane protein</topology>
    </subcellularLocation>
</comment>
<comment type="similarity">
    <text evidence="1">Belongs to the PetG family.</text>
</comment>